<gene>
    <name evidence="1" type="primary">queC</name>
    <name type="ordered locus">DVU_2659</name>
</gene>
<proteinExistence type="inferred from homology"/>
<feature type="chain" id="PRO_0000246838" description="7-cyano-7-deazaguanine synthase">
    <location>
        <begin position="1"/>
        <end position="242"/>
    </location>
</feature>
<feature type="binding site" evidence="1">
    <location>
        <begin position="12"/>
        <end position="22"/>
    </location>
    <ligand>
        <name>ATP</name>
        <dbReference type="ChEBI" id="CHEBI:30616"/>
    </ligand>
</feature>
<feature type="binding site" evidence="1">
    <location>
        <position position="200"/>
    </location>
    <ligand>
        <name>Zn(2+)</name>
        <dbReference type="ChEBI" id="CHEBI:29105"/>
    </ligand>
</feature>
<feature type="binding site" evidence="1">
    <location>
        <position position="215"/>
    </location>
    <ligand>
        <name>Zn(2+)</name>
        <dbReference type="ChEBI" id="CHEBI:29105"/>
    </ligand>
</feature>
<feature type="binding site" evidence="1">
    <location>
        <position position="218"/>
    </location>
    <ligand>
        <name>Zn(2+)</name>
        <dbReference type="ChEBI" id="CHEBI:29105"/>
    </ligand>
</feature>
<feature type="binding site" evidence="1">
    <location>
        <position position="221"/>
    </location>
    <ligand>
        <name>Zn(2+)</name>
        <dbReference type="ChEBI" id="CHEBI:29105"/>
    </ligand>
</feature>
<comment type="function">
    <text evidence="1">Catalyzes the ATP-dependent conversion of 7-carboxy-7-deazaguanine (CDG) to 7-cyano-7-deazaguanine (preQ(0)).</text>
</comment>
<comment type="catalytic activity">
    <reaction evidence="1">
        <text>7-carboxy-7-deazaguanine + NH4(+) + ATP = 7-cyano-7-deazaguanine + ADP + phosphate + H2O + H(+)</text>
        <dbReference type="Rhea" id="RHEA:27982"/>
        <dbReference type="ChEBI" id="CHEBI:15377"/>
        <dbReference type="ChEBI" id="CHEBI:15378"/>
        <dbReference type="ChEBI" id="CHEBI:28938"/>
        <dbReference type="ChEBI" id="CHEBI:30616"/>
        <dbReference type="ChEBI" id="CHEBI:43474"/>
        <dbReference type="ChEBI" id="CHEBI:45075"/>
        <dbReference type="ChEBI" id="CHEBI:61036"/>
        <dbReference type="ChEBI" id="CHEBI:456216"/>
        <dbReference type="EC" id="6.3.4.20"/>
    </reaction>
</comment>
<comment type="cofactor">
    <cofactor evidence="1">
        <name>Zn(2+)</name>
        <dbReference type="ChEBI" id="CHEBI:29105"/>
    </cofactor>
    <text evidence="1">Binds 1 zinc ion per subunit.</text>
</comment>
<comment type="pathway">
    <text evidence="1">Purine metabolism; 7-cyano-7-deazaguanine biosynthesis.</text>
</comment>
<comment type="similarity">
    <text evidence="1">Belongs to the QueC family.</text>
</comment>
<reference key="1">
    <citation type="journal article" date="2004" name="Nat. Biotechnol.">
        <title>The genome sequence of the anaerobic, sulfate-reducing bacterium Desulfovibrio vulgaris Hildenborough.</title>
        <authorList>
            <person name="Heidelberg J.F."/>
            <person name="Seshadri R."/>
            <person name="Haveman S.A."/>
            <person name="Hemme C.L."/>
            <person name="Paulsen I.T."/>
            <person name="Kolonay J.F."/>
            <person name="Eisen J.A."/>
            <person name="Ward N.L."/>
            <person name="Methe B.A."/>
            <person name="Brinkac L.M."/>
            <person name="Daugherty S.C."/>
            <person name="DeBoy R.T."/>
            <person name="Dodson R.J."/>
            <person name="Durkin A.S."/>
            <person name="Madupu R."/>
            <person name="Nelson W.C."/>
            <person name="Sullivan S.A."/>
            <person name="Fouts D.E."/>
            <person name="Haft D.H."/>
            <person name="Selengut J."/>
            <person name="Peterson J.D."/>
            <person name="Davidsen T.M."/>
            <person name="Zafar N."/>
            <person name="Zhou L."/>
            <person name="Radune D."/>
            <person name="Dimitrov G."/>
            <person name="Hance M."/>
            <person name="Tran K."/>
            <person name="Khouri H.M."/>
            <person name="Gill J."/>
            <person name="Utterback T.R."/>
            <person name="Feldblyum T.V."/>
            <person name="Wall J.D."/>
            <person name="Voordouw G."/>
            <person name="Fraser C.M."/>
        </authorList>
    </citation>
    <scope>NUCLEOTIDE SEQUENCE [LARGE SCALE GENOMIC DNA]</scope>
    <source>
        <strain>ATCC 29579 / DSM 644 / CCUG 34227 / NCIMB 8303 / VKM B-1760 / Hildenborough</strain>
    </source>
</reference>
<evidence type="ECO:0000255" key="1">
    <source>
        <dbReference type="HAMAP-Rule" id="MF_01633"/>
    </source>
</evidence>
<dbReference type="EC" id="6.3.4.20" evidence="1"/>
<dbReference type="EMBL" id="AE017285">
    <property type="protein sequence ID" value="AAS97131.1"/>
    <property type="molecule type" value="Genomic_DNA"/>
</dbReference>
<dbReference type="RefSeq" id="WP_010939928.1">
    <property type="nucleotide sequence ID" value="NC_002937.3"/>
</dbReference>
<dbReference type="RefSeq" id="YP_011871.1">
    <property type="nucleotide sequence ID" value="NC_002937.3"/>
</dbReference>
<dbReference type="SMR" id="Q728E4"/>
<dbReference type="IntAct" id="Q728E4">
    <property type="interactions" value="1"/>
</dbReference>
<dbReference type="STRING" id="882.DVU_2659"/>
<dbReference type="PaxDb" id="882-DVU_2659"/>
<dbReference type="EnsemblBacteria" id="AAS97131">
    <property type="protein sequence ID" value="AAS97131"/>
    <property type="gene ID" value="DVU_2659"/>
</dbReference>
<dbReference type="KEGG" id="dvu:DVU_2659"/>
<dbReference type="PATRIC" id="fig|882.5.peg.2403"/>
<dbReference type="eggNOG" id="COG0603">
    <property type="taxonomic scope" value="Bacteria"/>
</dbReference>
<dbReference type="HOGENOM" id="CLU_081854_0_0_7"/>
<dbReference type="OrthoDB" id="9789567at2"/>
<dbReference type="PhylomeDB" id="Q728E4"/>
<dbReference type="UniPathway" id="UPA00391"/>
<dbReference type="Proteomes" id="UP000002194">
    <property type="component" value="Chromosome"/>
</dbReference>
<dbReference type="GO" id="GO:0005524">
    <property type="term" value="F:ATP binding"/>
    <property type="evidence" value="ECO:0007669"/>
    <property type="project" value="UniProtKB-UniRule"/>
</dbReference>
<dbReference type="GO" id="GO:0016879">
    <property type="term" value="F:ligase activity, forming carbon-nitrogen bonds"/>
    <property type="evidence" value="ECO:0007669"/>
    <property type="project" value="UniProtKB-UniRule"/>
</dbReference>
<dbReference type="GO" id="GO:0008270">
    <property type="term" value="F:zinc ion binding"/>
    <property type="evidence" value="ECO:0007669"/>
    <property type="project" value="UniProtKB-UniRule"/>
</dbReference>
<dbReference type="GO" id="GO:0008616">
    <property type="term" value="P:queuosine biosynthetic process"/>
    <property type="evidence" value="ECO:0007669"/>
    <property type="project" value="UniProtKB-UniRule"/>
</dbReference>
<dbReference type="CDD" id="cd01995">
    <property type="entry name" value="QueC-like"/>
    <property type="match status" value="1"/>
</dbReference>
<dbReference type="Gene3D" id="3.40.50.620">
    <property type="entry name" value="HUPs"/>
    <property type="match status" value="1"/>
</dbReference>
<dbReference type="HAMAP" id="MF_01633">
    <property type="entry name" value="QueC"/>
    <property type="match status" value="1"/>
</dbReference>
<dbReference type="InterPro" id="IPR018317">
    <property type="entry name" value="QueC"/>
</dbReference>
<dbReference type="InterPro" id="IPR014729">
    <property type="entry name" value="Rossmann-like_a/b/a_fold"/>
</dbReference>
<dbReference type="NCBIfam" id="TIGR00364">
    <property type="entry name" value="7-cyano-7-deazaguanine synthase QueC"/>
    <property type="match status" value="1"/>
</dbReference>
<dbReference type="PANTHER" id="PTHR42914">
    <property type="entry name" value="7-CYANO-7-DEAZAGUANINE SYNTHASE"/>
    <property type="match status" value="1"/>
</dbReference>
<dbReference type="PANTHER" id="PTHR42914:SF1">
    <property type="entry name" value="7-CYANO-7-DEAZAGUANINE SYNTHASE"/>
    <property type="match status" value="1"/>
</dbReference>
<dbReference type="Pfam" id="PF06508">
    <property type="entry name" value="QueC"/>
    <property type="match status" value="1"/>
</dbReference>
<dbReference type="PIRSF" id="PIRSF006293">
    <property type="entry name" value="ExsB"/>
    <property type="match status" value="1"/>
</dbReference>
<dbReference type="SUPFAM" id="SSF52402">
    <property type="entry name" value="Adenine nucleotide alpha hydrolases-like"/>
    <property type="match status" value="1"/>
</dbReference>
<protein>
    <recommendedName>
        <fullName evidence="1">7-cyano-7-deazaguanine synthase</fullName>
        <ecNumber evidence="1">6.3.4.20</ecNumber>
    </recommendedName>
    <alternativeName>
        <fullName evidence="1">7-cyano-7-carbaguanine synthase</fullName>
    </alternativeName>
    <alternativeName>
        <fullName evidence="1">PreQ(0) synthase</fullName>
    </alternativeName>
    <alternativeName>
        <fullName evidence="1">Queuosine biosynthesis protein QueC</fullName>
    </alternativeName>
</protein>
<organism>
    <name type="scientific">Nitratidesulfovibrio vulgaris (strain ATCC 29579 / DSM 644 / CCUG 34227 / NCIMB 8303 / VKM B-1760 / Hildenborough)</name>
    <name type="common">Desulfovibrio vulgaris</name>
    <dbReference type="NCBI Taxonomy" id="882"/>
    <lineage>
        <taxon>Bacteria</taxon>
        <taxon>Pseudomonadati</taxon>
        <taxon>Thermodesulfobacteriota</taxon>
        <taxon>Desulfovibrionia</taxon>
        <taxon>Desulfovibrionales</taxon>
        <taxon>Desulfovibrionaceae</taxon>
        <taxon>Nitratidesulfovibrio</taxon>
    </lineage>
</organism>
<sequence>MPSCDGNALVIFSGGQDSTTCLGWALNRFRTVATIGFHYGQRHDVEMQCRQDVLAAIGDVRPGWKAHLGTDTVVEMGLFRELGETALTHDVAIEMGRNGLPSTFVPGRNLMFLTAAAACAYRQGIRHLVLGVCETDFSGYPDCRDDAMKAMQVALNLGMESRFVVHTPLMWLTKAQTWDMARDEGGQDFVELVLERSHTCYKGVRDVRHPWGYGCGTCPACELRRAGWDAYVAGHAVHGEGR</sequence>
<name>QUEC_NITV2</name>
<keyword id="KW-0067">ATP-binding</keyword>
<keyword id="KW-0436">Ligase</keyword>
<keyword id="KW-0479">Metal-binding</keyword>
<keyword id="KW-0547">Nucleotide-binding</keyword>
<keyword id="KW-0671">Queuosine biosynthesis</keyword>
<keyword id="KW-1185">Reference proteome</keyword>
<keyword id="KW-0862">Zinc</keyword>
<accession>Q728E4</accession>